<comment type="function">
    <text evidence="1">Picornain 3C-like protease is a thiol protease that cleaves the P1 and P2 polyproteins.</text>
</comment>
<comment type="catalytic activity">
    <reaction evidence="3">
        <text>RNA(n) + a ribonucleoside 5'-triphosphate = RNA(n+1) + diphosphate</text>
        <dbReference type="Rhea" id="RHEA:21248"/>
        <dbReference type="Rhea" id="RHEA-COMP:14527"/>
        <dbReference type="Rhea" id="RHEA-COMP:17342"/>
        <dbReference type="ChEBI" id="CHEBI:33019"/>
        <dbReference type="ChEBI" id="CHEBI:61557"/>
        <dbReference type="ChEBI" id="CHEBI:140395"/>
        <dbReference type="EC" id="2.7.7.48"/>
    </reaction>
</comment>
<comment type="subcellular location">
    <molecule>Viral genome-linked protein</molecule>
    <subcellularLocation>
        <location evidence="1">Host endoplasmic reticulum lumen</location>
    </subcellularLocation>
</comment>
<comment type="subcellular location">
    <molecule>Putative ATP-dependent helicase</molecule>
    <subcellularLocation>
        <location evidence="1">Host endoplasmic reticulum membrane</location>
        <topology evidence="1">Single-pass membrane protein</topology>
    </subcellularLocation>
</comment>
<comment type="PTM">
    <text evidence="1">Specific enzymatic cleavages by picornain 3C-like protease in vivo yield mature proteins. Picornain 3C-like protease is autocatalytically processed (By similarity).</text>
</comment>
<comment type="PTM">
    <text evidence="1">VPg is uridylylated by the polymerase and is covalently linked to the 5'-end of genomic RNA. This uridylylated form acts as a nucleotide-peptide primer for the polymerase (By similarity).</text>
</comment>
<comment type="similarity">
    <text evidence="6">Belongs to the nepoviruses RNA1 polyprotein family.</text>
</comment>
<name>POL1_BRSV</name>
<protein>
    <recommendedName>
        <fullName>RNA1 polyprotein</fullName>
    </recommendedName>
    <alternativeName>
        <fullName>P1</fullName>
    </alternativeName>
    <component>
        <recommendedName>
            <fullName>P1A protein</fullName>
            <shortName>1A</shortName>
        </recommendedName>
        <alternativeName>
            <fullName>Protease cofactor</fullName>
        </alternativeName>
    </component>
    <component>
        <recommendedName>
            <fullName>Putative ATP-dependent helicase</fullName>
            <ecNumber>3.6.4.-</ecNumber>
        </recommendedName>
        <alternativeName>
            <fullName>1B</fullName>
        </alternativeName>
        <alternativeName>
            <fullName>Membrane-binding protein</fullName>
        </alternativeName>
        <alternativeName>
            <fullName>NTP-binding protein</fullName>
            <shortName>NTB</shortName>
        </alternativeName>
    </component>
    <component>
        <recommendedName>
            <fullName>Viral genome-linked protein</fullName>
        </recommendedName>
        <alternativeName>
            <fullName>1C-VPg</fullName>
        </alternativeName>
    </component>
    <component>
        <recommendedName>
            <fullName>Picornain 3C-like protease</fullName>
            <shortName>3C-like protease</shortName>
            <ecNumber>3.4.22.-</ecNumber>
        </recommendedName>
        <alternativeName>
            <fullName>1D-PRO</fullName>
        </alternativeName>
    </component>
    <component>
        <recommendedName>
            <fullName>RNA-directed RNA polymerase</fullName>
            <ecNumber>2.7.7.48</ecNumber>
        </recommendedName>
        <alternativeName>
            <fullName>1E-POL</fullName>
        </alternativeName>
    </component>
</protein>
<accession>P18522</accession>
<keyword id="KW-0067">ATP-binding</keyword>
<keyword id="KW-0191">Covalent protein-RNA linkage</keyword>
<keyword id="KW-0347">Helicase</keyword>
<keyword id="KW-1038">Host endoplasmic reticulum</keyword>
<keyword id="KW-1043">Host membrane</keyword>
<keyword id="KW-0378">Hydrolase</keyword>
<keyword id="KW-0472">Membrane</keyword>
<keyword id="KW-0547">Nucleotide-binding</keyword>
<keyword id="KW-0548">Nucleotidyltransferase</keyword>
<keyword id="KW-0645">Protease</keyword>
<keyword id="KW-0694">RNA-binding</keyword>
<keyword id="KW-0696">RNA-directed RNA polymerase</keyword>
<keyword id="KW-0788">Thiol protease</keyword>
<keyword id="KW-0808">Transferase</keyword>
<keyword id="KW-0812">Transmembrane</keyword>
<keyword id="KW-1133">Transmembrane helix</keyword>
<keyword id="KW-0693">Viral RNA replication</keyword>
<organism>
    <name type="scientific">Beet ringspot virus</name>
    <name type="common">BRSV</name>
    <name type="synonym">Tomato black ring virus (strain S)</name>
    <dbReference type="NCBI Taxonomy" id="191547"/>
    <lineage>
        <taxon>Viruses</taxon>
        <taxon>Riboviria</taxon>
        <taxon>Orthornavirae</taxon>
        <taxon>Pisuviricota</taxon>
        <taxon>Pisoniviricetes</taxon>
        <taxon>Picornavirales</taxon>
        <taxon>Secoviridae</taxon>
        <taxon>Comovirinae</taxon>
        <taxon>Nepovirus</taxon>
        <taxon>Nepovirus betae</taxon>
    </lineage>
</organism>
<dbReference type="EC" id="3.6.4.-"/>
<dbReference type="EC" id="3.4.22.-"/>
<dbReference type="EC" id="2.7.7.48"/>
<dbReference type="EMBL" id="D00322">
    <property type="protein sequence ID" value="BAA00234.1"/>
    <property type="molecule type" value="Genomic_RNA"/>
</dbReference>
<dbReference type="PIR" id="JQ0009">
    <property type="entry name" value="GNVVTB"/>
</dbReference>
<dbReference type="RefSeq" id="NP_620112.1">
    <property type="nucleotide sequence ID" value="NC_003693.1"/>
</dbReference>
<dbReference type="SMR" id="P18522"/>
<dbReference type="MEROPS" id="C03.025"/>
<dbReference type="GeneID" id="988049"/>
<dbReference type="KEGG" id="vg:988049"/>
<dbReference type="Proteomes" id="UP000007615">
    <property type="component" value="Genome"/>
</dbReference>
<dbReference type="GO" id="GO:0044166">
    <property type="term" value="C:host cell endoplasmic reticulum lumen"/>
    <property type="evidence" value="ECO:0007669"/>
    <property type="project" value="UniProtKB-SubCell"/>
</dbReference>
<dbReference type="GO" id="GO:0044167">
    <property type="term" value="C:host cell endoplasmic reticulum membrane"/>
    <property type="evidence" value="ECO:0007669"/>
    <property type="project" value="UniProtKB-SubCell"/>
</dbReference>
<dbReference type="GO" id="GO:0016020">
    <property type="term" value="C:membrane"/>
    <property type="evidence" value="ECO:0007669"/>
    <property type="project" value="UniProtKB-KW"/>
</dbReference>
<dbReference type="GO" id="GO:0005524">
    <property type="term" value="F:ATP binding"/>
    <property type="evidence" value="ECO:0007669"/>
    <property type="project" value="UniProtKB-KW"/>
</dbReference>
<dbReference type="GO" id="GO:0004197">
    <property type="term" value="F:cysteine-type endopeptidase activity"/>
    <property type="evidence" value="ECO:0007669"/>
    <property type="project" value="InterPro"/>
</dbReference>
<dbReference type="GO" id="GO:0003723">
    <property type="term" value="F:RNA binding"/>
    <property type="evidence" value="ECO:0007669"/>
    <property type="project" value="UniProtKB-KW"/>
</dbReference>
<dbReference type="GO" id="GO:0003724">
    <property type="term" value="F:RNA helicase activity"/>
    <property type="evidence" value="ECO:0007669"/>
    <property type="project" value="InterPro"/>
</dbReference>
<dbReference type="GO" id="GO:0003968">
    <property type="term" value="F:RNA-directed RNA polymerase activity"/>
    <property type="evidence" value="ECO:0007669"/>
    <property type="project" value="UniProtKB-KW"/>
</dbReference>
<dbReference type="GO" id="GO:0006351">
    <property type="term" value="P:DNA-templated transcription"/>
    <property type="evidence" value="ECO:0007669"/>
    <property type="project" value="InterPro"/>
</dbReference>
<dbReference type="GO" id="GO:0006508">
    <property type="term" value="P:proteolysis"/>
    <property type="evidence" value="ECO:0007669"/>
    <property type="project" value="UniProtKB-KW"/>
</dbReference>
<dbReference type="GO" id="GO:0039694">
    <property type="term" value="P:viral RNA genome replication"/>
    <property type="evidence" value="ECO:0007669"/>
    <property type="project" value="InterPro"/>
</dbReference>
<dbReference type="Gene3D" id="1.20.960.20">
    <property type="match status" value="1"/>
</dbReference>
<dbReference type="Gene3D" id="3.30.70.270">
    <property type="match status" value="1"/>
</dbReference>
<dbReference type="InterPro" id="IPR043502">
    <property type="entry name" value="DNA/RNA_pol_sf"/>
</dbReference>
<dbReference type="InterPro" id="IPR000605">
    <property type="entry name" value="Helicase_SF3_ssDNA/RNA_vir"/>
</dbReference>
<dbReference type="InterPro" id="IPR014759">
    <property type="entry name" value="Helicase_SF3_ssRNA_vir"/>
</dbReference>
<dbReference type="InterPro" id="IPR044067">
    <property type="entry name" value="PCV_3C_PRO"/>
</dbReference>
<dbReference type="InterPro" id="IPR043128">
    <property type="entry name" value="Rev_trsase/Diguanyl_cyclase"/>
</dbReference>
<dbReference type="InterPro" id="IPR001205">
    <property type="entry name" value="RNA-dir_pol_C"/>
</dbReference>
<dbReference type="InterPro" id="IPR007094">
    <property type="entry name" value="RNA-dir_pol_PSvirus"/>
</dbReference>
<dbReference type="Pfam" id="PF00680">
    <property type="entry name" value="RdRP_1"/>
    <property type="match status" value="1"/>
</dbReference>
<dbReference type="Pfam" id="PF00910">
    <property type="entry name" value="RNA_helicase"/>
    <property type="match status" value="1"/>
</dbReference>
<dbReference type="SUPFAM" id="SSF56672">
    <property type="entry name" value="DNA/RNA polymerases"/>
    <property type="match status" value="1"/>
</dbReference>
<dbReference type="PROSITE" id="PS51874">
    <property type="entry name" value="PCV_3C_PRO"/>
    <property type="match status" value="1"/>
</dbReference>
<dbReference type="PROSITE" id="PS50507">
    <property type="entry name" value="RDRP_SSRNA_POS"/>
    <property type="match status" value="1"/>
</dbReference>
<dbReference type="PROSITE" id="PS51218">
    <property type="entry name" value="SF3_HELICASE_2"/>
    <property type="match status" value="1"/>
</dbReference>
<sequence length="2264" mass="253678">MSVTLSPSGDCFSFNHVKYNNSLNKYLFYNSNLDIVLDDFDFYFNFYVKKYNVLLSFFSDRVLSALYTSMSVSEAASLAMEDFCELALDELKINPFHQLWEETLANWPVYPGTSLLDFCRTQYEIRREAAEASAEILRLKEVARQRAFDDEVEFLIKHGAKVHFAPSFAAQLWRAGKDQKKCRGILLGKLNKAKALGEAHRSAVARAQAKAEVLREFEPSPQQIQRALEAQIFADRLSRKYAALTARVRAKRAAARELREKELFLETQDLLNAPLLPPMEKVGIERKYRKVRPTGSNVTSTPKPNVLENLCPFMGLGAKTADVRCQATLMAGKIHPQYPRLASAIYAWVLGPSMKFECIAPVKTFIKGLTFMVDYFPEEVLIDELNKINSEARCFEASLVLEEERAKLEAHAENANCRANIFMKAMAGVKNMAKCAYSGFLTGCEEAGRSLSEGVCSVMINSFRECIKMIHKELGCAMELIEVMIKKVKDWYNSMLEKLHCGLATLGTYAMYALAILLGCGLTTLLERCIGGAGILTKLFVTGVFAAIGLHAAGGFDGLQREMVQMCTALAAGIFDVHHKGNGKYSPMADILAEQRLEDRRADNVRSIPIISGIISAMQQFGTGLCSMHSISLIEIGKLGAACHSMRMGKEALKEFCATIMYYLGRISDKVTGRETVFFDELSTLVSVDVRGWILCAQSCIRESFHTEIGNQFFRDMVAQLVDDGQKLQVGVNGIPRKISTDYSQLSSDTEGPNELHKRTIRAGISEGRRCEPVWIYLFGQRHCGKSNFMATLDNALAKHFGLPNTTAYRNCKDSFFSGYSGQTFFHVDDLSSVKLDPPMEAEMINLVSCQEVPLNMADLADKPIYFRSPFIISSSNFEDVPAGCGVRDIEAYRSRKACLVEMRRKPGVLFDPDNPLLASQARFKDPMSQMLLEGQTEENSWLEMEDVVTEIINISARHRAAQEKLQARYMREKSLLDPLALAAENFLKGEVQTHILIFLVLNLKSWNPKPQGGRGLYVDGSLYLLDPTFQFEEIPITDDGYKRLWDERMRKSFLSKIQTGEYLNSKSMVVTGFLRSLVNGDCAVLSKDTLSSSASVAQQSIFKALGIDERIYLRTLQHQLDLYSADIPENPYSNSAWIKILKAIGMGRTYLAENGCGILMIAAALILILVSAWGFWKLFIGLFSGSMSLGAAIVGMSAVDIKAQQKSSSQEGGYRARNIPIHHRYAYAKSQAGDGLLPAARFVCCYLSTGGGFVSAMQYKNKSVRMTRHQALRFQEGEQLTVIFSSTGESQLIRWHKYMMREEPGSEIVTWLAPSLPSLSPDLKDLFLEDKEVDLPNHFKTIGYVLRVDNTAFHYDLLDTYAAVDKTPLPLKGVVGNELYLHEIPEKITFHYESRNDDCGMIILCQIKGKMRVVGMLVAGKDKTSWADIMPPNTLAELQSQIEYIPKFGEAYDGFFKAGYVPMADAPTLPKKTNMVPVPQSLRVPCDVPIKEPAVLTNADKRCPAGVNPPVTALKKKFEHPMKELEQEILDEVATDILETWYDCEDHVLNDIPLVVAINGIPADSEEAELENFVMKTSPGYPYFKNNRAEKLKGKSAYFEEAEDGTLKLKEGGMAAKLHENLVEFTKNEVPELVVIECTKDELLPERKIKVGACRLFEIMPLHYNLFLRQKTCAFTQFLQHNRHVLPCQVGTNPYSREWGHMLNRLMRPKTNEAINCDYSGFDGLLNAQVIECIAKMINRLYALSGESEVQQAQRYNMLMALVGRYAFVGPEVYKVNCGLPSGFALTVVVNSVFNEILIRYAYKKLAPKPERNRFNQVVCLLVYGDDNLISVSPSIASWFTGEAIRITLAEKKVKITDGSDKDAPTIEAKSFWELDFLKRKFLKLDNGIVQAPLDRSAIFSSLYWLTPDKSKFHASQRASDFQGTVDVVEELILNVNVALMELYLHNDPREFSRVRDFYIKALPLATGQFRTWAFCEAFHSAQQTGMLKYDPAKVLDHMSGLDFKKFMHVSEQGNKAHFYTEMLGVAGPHYKPQENDFIVSTEPLKMGVCGEHVPIQYGSGVGGLPTKKWVLDFGRPSQLKNKLGYLIHPILRAQIEAGKRLVFMSPAPYVANNAALIAFGTGGKMLIQKDALVHYRNVIPESTSGLEQYFDAPLPTATIGTFYFANGETYAALCEYKEGKVLNYEGFPTLILNEAAKDRKVPCMVATQAKTKFKVSLACDSTMCPHHTAVCETYEKAFRHCWLAKCKTSAVKVSPWHGTKLS</sequence>
<evidence type="ECO:0000250" key="1"/>
<evidence type="ECO:0000255" key="2"/>
<evidence type="ECO:0000255" key="3">
    <source>
        <dbReference type="PROSITE-ProRule" id="PRU00539"/>
    </source>
</evidence>
<evidence type="ECO:0000255" key="4">
    <source>
        <dbReference type="PROSITE-ProRule" id="PRU00551"/>
    </source>
</evidence>
<evidence type="ECO:0000255" key="5">
    <source>
        <dbReference type="PROSITE-ProRule" id="PRU01222"/>
    </source>
</evidence>
<evidence type="ECO:0000305" key="6"/>
<proteinExistence type="inferred from homology"/>
<organismHost>
    <name type="scientific">Allium porrum</name>
    <name type="common">Leek</name>
    <name type="synonym">Allium ampeloprasum var. porrum</name>
    <dbReference type="NCBI Taxonomy" id="4681"/>
</organismHost>
<organismHost>
    <name type="scientific">Apium graveolens</name>
    <name type="common">Celery</name>
    <dbReference type="NCBI Taxonomy" id="4045"/>
</organismHost>
<organismHost>
    <name type="scientific">Beta vulgaris</name>
    <name type="common">Sugar beet</name>
    <dbReference type="NCBI Taxonomy" id="161934"/>
</organismHost>
<organismHost>
    <name type="scientific">Fraxinus</name>
    <name type="common">ash trees</name>
    <dbReference type="NCBI Taxonomy" id="38871"/>
</organismHost>
<organismHost>
    <name type="scientific">Lactuca sativa</name>
    <name type="common">Garden lettuce</name>
    <dbReference type="NCBI Taxonomy" id="4236"/>
</organismHost>
<organismHost>
    <name type="scientific">Narcissus pseudonarcissus</name>
    <name type="common">Daffodil</name>
    <dbReference type="NCBI Taxonomy" id="39639"/>
</organismHost>
<organismHost>
    <name type="scientific">Phaseolus vulgaris</name>
    <name type="common">Kidney bean</name>
    <name type="synonym">French bean</name>
    <dbReference type="NCBI Taxonomy" id="3885"/>
</organismHost>
<organismHost>
    <name type="scientific">Robinia pseudoacacia</name>
    <name type="common">Black locust</name>
    <dbReference type="NCBI Taxonomy" id="35938"/>
</organismHost>
<organismHost>
    <name type="scientific">Rubus</name>
    <name type="common">bramble</name>
    <dbReference type="NCBI Taxonomy" id="23216"/>
</organismHost>
<organismHost>
    <name type="scientific">Solanum lycopersicum</name>
    <name type="common">Tomato</name>
    <name type="synonym">Lycopersicon esculentum</name>
    <dbReference type="NCBI Taxonomy" id="4081"/>
</organismHost>
<organismHost>
    <name type="scientific">Solanum tuberosum</name>
    <name type="common">Potato</name>
    <dbReference type="NCBI Taxonomy" id="4113"/>
</organismHost>
<organismHost>
    <name type="scientific">Tulipa</name>
    <dbReference type="NCBI Taxonomy" id="13305"/>
</organismHost>
<organismHost>
    <name type="scientific">Vitis</name>
    <dbReference type="NCBI Taxonomy" id="3603"/>
</organismHost>
<feature type="chain" id="PRO_0000037060" description="P1A protein" evidence="2">
    <location>
        <begin position="1"/>
        <end position="565"/>
    </location>
</feature>
<feature type="chain" id="PRO_0000037061" description="Putative ATP-dependent helicase" evidence="2">
    <location>
        <begin position="566"/>
        <end position="1203"/>
    </location>
</feature>
<feature type="chain" id="PRO_0000037062" description="Viral genome-linked protein" evidence="1">
    <location>
        <begin position="1204"/>
        <end position="1230"/>
    </location>
</feature>
<feature type="chain" id="PRO_0000037063" description="Picornain 3C-like protease" evidence="2">
    <location>
        <begin position="1231"/>
        <end position="1440"/>
    </location>
</feature>
<feature type="chain" id="PRO_0000037064" description="RNA-directed RNA polymerase" evidence="2">
    <location>
        <begin position="1441"/>
        <end position="2264"/>
    </location>
</feature>
<feature type="topological domain" description="Cytoplasmic" evidence="2">
    <location>
        <begin position="566"/>
        <end position="1156"/>
    </location>
</feature>
<feature type="transmembrane region" description="Helical" evidence="2">
    <location>
        <begin position="1157"/>
        <end position="1177"/>
    </location>
</feature>
<feature type="topological domain" description="Lumenal" evidence="2">
    <location>
        <begin position="1178"/>
        <end position="1203"/>
    </location>
</feature>
<feature type="domain" description="SF3 helicase" evidence="4">
    <location>
        <begin position="750"/>
        <end position="916"/>
    </location>
</feature>
<feature type="domain" description="Peptidase C3" evidence="5">
    <location>
        <begin position="1227"/>
        <end position="1436"/>
    </location>
</feature>
<feature type="domain" description="RdRp catalytic" evidence="3">
    <location>
        <begin position="1713"/>
        <end position="1841"/>
    </location>
</feature>
<feature type="active site" description="For picornain 3C-like protease activity" evidence="5">
    <location>
        <position position="1270"/>
    </location>
</feature>
<feature type="active site" description="For picornain 3C-like protease activity" evidence="5">
    <location>
        <position position="1308"/>
    </location>
</feature>
<feature type="active site" description="For picornain 3C-like protease activity" evidence="5">
    <location>
        <position position="1400"/>
    </location>
</feature>
<feature type="binding site" evidence="4">
    <location>
        <begin position="780"/>
        <end position="787"/>
    </location>
    <ligand>
        <name>ATP</name>
        <dbReference type="ChEBI" id="CHEBI:30616"/>
    </ligand>
</feature>
<reference key="1">
    <citation type="journal article" date="1988" name="J. Gen. Virol.">
        <title>Nucleotide sequence of tomato black ring virus RNA-1.</title>
        <authorList>
            <person name="Greif C."/>
            <person name="Hemmer O."/>
            <person name="Fritsch C."/>
        </authorList>
    </citation>
    <scope>NUCLEOTIDE SEQUENCE [GENOMIC RNA]</scope>
</reference>